<evidence type="ECO:0000250" key="1"/>
<evidence type="ECO:0000250" key="2">
    <source>
        <dbReference type="UniProtKB" id="P10238"/>
    </source>
</evidence>
<evidence type="ECO:0000256" key="3">
    <source>
        <dbReference type="SAM" id="MobiDB-lite"/>
    </source>
</evidence>
<evidence type="ECO:0000305" key="4"/>
<reference key="1">
    <citation type="journal article" date="2007" name="J. Virol.">
        <title>Identification of novel rodent herpesviruses, including the first gammaherpesvirus of Mus musculus.</title>
        <authorList>
            <person name="Ehlers B."/>
            <person name="Kuchler J."/>
            <person name="Yasmum N."/>
            <person name="Dural G."/>
            <person name="Voigt S."/>
            <person name="Schmidt-Chanasit J."/>
            <person name="Jakel T."/>
            <person name="Matuschka F.R."/>
            <person name="Richter D."/>
            <person name="Essbauer S."/>
            <person name="Hughes D.J."/>
            <person name="Summers C."/>
            <person name="Bennett M."/>
            <person name="Stewart J.P."/>
            <person name="Ulrich R.G."/>
        </authorList>
    </citation>
    <scope>NUCLEOTIDE SEQUENCE [GENOMIC DNA]</scope>
</reference>
<reference key="2">
    <citation type="journal article" date="2001" name="J. Gen. Virol.">
        <title>Genetic and ultrastructural characterization of a European isolate of the fatal endotheliotropic elephant herpesvirus.</title>
        <authorList>
            <person name="Ehlers B."/>
            <person name="Burkhardt S."/>
            <person name="Goltz M."/>
            <person name="Bergmann V."/>
            <person name="Ochs A."/>
            <person name="Weiler H."/>
            <person name="Hentschke J."/>
        </authorList>
    </citation>
    <scope>NUCLEOTIDE SEQUENCE [GENOMIC DNA]</scope>
</reference>
<feature type="chain" id="PRO_0000408180" description="mRNA export factor ICP27 homolog">
    <location>
        <begin position="1"/>
        <end position="659"/>
    </location>
</feature>
<feature type="zinc finger region" description="CHC2-type" evidence="2">
    <location>
        <begin position="130"/>
        <end position="273"/>
    </location>
</feature>
<feature type="region of interest" description="Disordered" evidence="3">
    <location>
        <begin position="317"/>
        <end position="659"/>
    </location>
</feature>
<feature type="compositionally biased region" description="Low complexity" evidence="3">
    <location>
        <begin position="324"/>
        <end position="336"/>
    </location>
</feature>
<feature type="compositionally biased region" description="Polar residues" evidence="3">
    <location>
        <begin position="354"/>
        <end position="365"/>
    </location>
</feature>
<feature type="compositionally biased region" description="Basic and acidic residues" evidence="3">
    <location>
        <begin position="387"/>
        <end position="397"/>
    </location>
</feature>
<feature type="compositionally biased region" description="Low complexity" evidence="3">
    <location>
        <begin position="413"/>
        <end position="427"/>
    </location>
</feature>
<feature type="compositionally biased region" description="Basic and acidic residues" evidence="3">
    <location>
        <begin position="483"/>
        <end position="499"/>
    </location>
</feature>
<feature type="compositionally biased region" description="Polar residues" evidence="3">
    <location>
        <begin position="503"/>
        <end position="513"/>
    </location>
</feature>
<feature type="compositionally biased region" description="Low complexity" evidence="3">
    <location>
        <begin position="553"/>
        <end position="575"/>
    </location>
</feature>
<feature type="compositionally biased region" description="Basic and acidic residues" evidence="3">
    <location>
        <begin position="598"/>
        <end position="610"/>
    </location>
</feature>
<feature type="compositionally biased region" description="Acidic residues" evidence="3">
    <location>
        <begin position="617"/>
        <end position="628"/>
    </location>
</feature>
<feature type="compositionally biased region" description="Acidic residues" evidence="3">
    <location>
        <begin position="646"/>
        <end position="659"/>
    </location>
</feature>
<feature type="binding site" evidence="2">
    <location>
        <position position="130"/>
    </location>
    <ligand>
        <name>Zn(2+)</name>
        <dbReference type="ChEBI" id="CHEBI:29105"/>
    </ligand>
</feature>
<feature type="binding site" evidence="2">
    <location>
        <position position="266"/>
    </location>
    <ligand>
        <name>Zn(2+)</name>
        <dbReference type="ChEBI" id="CHEBI:29105"/>
    </ligand>
</feature>
<feature type="binding site" evidence="2">
    <location>
        <position position="268"/>
    </location>
    <ligand>
        <name>Zn(2+)</name>
        <dbReference type="ChEBI" id="CHEBI:29105"/>
    </ligand>
</feature>
<feature type="binding site" evidence="2">
    <location>
        <position position="273"/>
    </location>
    <ligand>
        <name>Zn(2+)</name>
        <dbReference type="ChEBI" id="CHEBI:29105"/>
    </ligand>
</feature>
<keyword id="KW-1035">Host cytoplasm</keyword>
<keyword id="KW-1048">Host nucleus</keyword>
<keyword id="KW-0479">Metal-binding</keyword>
<keyword id="KW-0804">Transcription</keyword>
<keyword id="KW-0805">Transcription regulation</keyword>
<keyword id="KW-0946">Virion</keyword>
<keyword id="KW-0920">Virion tegument</keyword>
<keyword id="KW-0862">Zinc</keyword>
<keyword id="KW-0863">Zinc-finger</keyword>
<organism>
    <name type="scientific">Elephantid herpesvirus 1 (isolate Asian elephant/Berlin/Kiba/1998)</name>
    <name type="common">EIHV-1</name>
    <name type="synonym">Elephant endotheliotropic herpesvirus</name>
    <dbReference type="NCBI Taxonomy" id="654902"/>
    <lineage>
        <taxon>Viruses</taxon>
        <taxon>Duplodnaviria</taxon>
        <taxon>Heunggongvirae</taxon>
        <taxon>Peploviricota</taxon>
        <taxon>Herviviricetes</taxon>
        <taxon>Herpesvirales</taxon>
        <taxon>Orthoherpesviridae</taxon>
        <taxon>Betaherpesvirinae</taxon>
        <taxon>Proboscivirus</taxon>
        <taxon>Proboscivirus elephantidbeta1</taxon>
        <taxon>Elephantid herpesvirus 1</taxon>
    </lineage>
</organism>
<comment type="function">
    <text evidence="1">Immediate early (EI) protein that plays many roles during productive infection including regulation of viral gene expression and nuclear export of intronless viral RNAs.</text>
</comment>
<comment type="subcellular location">
    <subcellularLocation>
        <location evidence="1">Virion tegument</location>
    </subcellularLocation>
    <subcellularLocation>
        <location evidence="1">Virion</location>
    </subcellularLocation>
    <subcellularLocation>
        <location>Host nucleus</location>
    </subcellularLocation>
    <subcellularLocation>
        <location>Host cytoplasm</location>
    </subcellularLocation>
    <text>Shuttles between host nucleus and cytoplasm.</text>
</comment>
<comment type="similarity">
    <text evidence="4">Belongs to the HHV-1 ICP27 protein family.</text>
</comment>
<sequence>MESGRRPIVPYTGPVPDVKKLLTENRFARLADLVVPLEVLGETDFVRHIHAQFENLSRDEMDELVLARTVAINSAPSLFSILLMAEETCSYFSAIDRLDIPVNPYDPYASTLSALKHATFSKLNVAKLSCMMSNGERPPSASSDYDFLKKIASGNGATVKSFSRSSESTVAPFPAATKQVPDISDIREFDFETFRHPFQKVICFLATIEKVISEIKGHRAPGCIAGGPINPKDRSRYIRDYDKQGIMRRYKDGCIIGLVKQGFCEHACNDNACRRRCKFALSVPYNLGMVFCPPTENSSVEDMDAYFERNRCPTRNGSFDDSRSATSGDGSSCSSAHKVTTPTDGVMMPEFPFSDQTDTSNNGTVRFSERRVSSSSKHRRRSNKHISPLDRPNDYHYQKNQPTPSDEKRYYHGSGSSSTEAVSTASAPLTGSAANQHPQHCGGQSGSDTGVISRGEGRHHGSHNGIPDFVSRSPVTTPPEVFSPERRSSEERSSSDQRRKSPLSRSASATSGGSKRRSFVDSPPRHESEDEDEDSDSSSSEAQKDRFKKRSGSRSNTPPSSPSKPDSAPAASASPGGDGGNDSDDGATEKGVTSNAKESVRVSERFETGDKSPTFIETEDESDDEDDQMSITSYDHSESSSAESGSETDGEDGESDMTL</sequence>
<proteinExistence type="inferred from homology"/>
<protein>
    <recommendedName>
        <fullName>mRNA export factor ICP27 homolog</fullName>
    </recommendedName>
</protein>
<accession>Q18LF8</accession>
<organismHost>
    <name type="scientific">Elephas maximus</name>
    <name type="common">Indian elephant</name>
    <dbReference type="NCBI Taxonomy" id="9783"/>
</organismHost>
<organismHost>
    <name type="scientific">Loxodonta africana</name>
    <name type="common">African elephant</name>
    <dbReference type="NCBI Taxonomy" id="9785"/>
</organismHost>
<organismHost>
    <name type="scientific">Loxodonta cyclotis</name>
    <name type="common">African forest elephant</name>
    <dbReference type="NCBI Taxonomy" id="99490"/>
</organismHost>
<name>ICP27_ELHVK</name>
<dbReference type="EMBL" id="AF322977">
    <property type="protein sequence ID" value="ABG36561.1"/>
    <property type="molecule type" value="Genomic_DNA"/>
</dbReference>
<dbReference type="GO" id="GO:0030430">
    <property type="term" value="C:host cell cytoplasm"/>
    <property type="evidence" value="ECO:0007669"/>
    <property type="project" value="UniProtKB-SubCell"/>
</dbReference>
<dbReference type="GO" id="GO:0042025">
    <property type="term" value="C:host cell nucleus"/>
    <property type="evidence" value="ECO:0007669"/>
    <property type="project" value="UniProtKB-SubCell"/>
</dbReference>
<dbReference type="GO" id="GO:0019033">
    <property type="term" value="C:viral tegument"/>
    <property type="evidence" value="ECO:0007669"/>
    <property type="project" value="UniProtKB-SubCell"/>
</dbReference>
<dbReference type="GO" id="GO:0008270">
    <property type="term" value="F:zinc ion binding"/>
    <property type="evidence" value="ECO:0007669"/>
    <property type="project" value="UniProtKB-KW"/>
</dbReference>
<dbReference type="GO" id="GO:0006355">
    <property type="term" value="P:regulation of DNA-templated transcription"/>
    <property type="evidence" value="ECO:0007669"/>
    <property type="project" value="InterPro"/>
</dbReference>
<dbReference type="InterPro" id="IPR008648">
    <property type="entry name" value="ICP27-like"/>
</dbReference>
<dbReference type="Pfam" id="PF05459">
    <property type="entry name" value="Herpes_UL69"/>
    <property type="match status" value="1"/>
</dbReference>